<dbReference type="EMBL" id="AC084414">
    <property type="protein sequence ID" value="AAG29744.1"/>
    <property type="molecule type" value="Genomic_DNA"/>
</dbReference>
<dbReference type="EMBL" id="CP002684">
    <property type="protein sequence ID" value="AEE32367.1"/>
    <property type="molecule type" value="Genomic_DNA"/>
</dbReference>
<dbReference type="EMBL" id="BT005793">
    <property type="protein sequence ID" value="AAO64195.1"/>
    <property type="molecule type" value="mRNA"/>
</dbReference>
<dbReference type="PIR" id="A96527">
    <property type="entry name" value="A96527"/>
</dbReference>
<dbReference type="RefSeq" id="NP_175322.1">
    <property type="nucleotide sequence ID" value="NM_103785.4"/>
</dbReference>
<dbReference type="SMR" id="Q9FVQ1"/>
<dbReference type="BioGRID" id="26539">
    <property type="interactions" value="9"/>
</dbReference>
<dbReference type="FunCoup" id="Q9FVQ1">
    <property type="interactions" value="678"/>
</dbReference>
<dbReference type="IntAct" id="Q9FVQ1">
    <property type="interactions" value="2"/>
</dbReference>
<dbReference type="STRING" id="3702.Q9FVQ1"/>
<dbReference type="iPTMnet" id="Q9FVQ1"/>
<dbReference type="MetOSite" id="Q9FVQ1"/>
<dbReference type="PaxDb" id="3702-AT1G48920.1"/>
<dbReference type="ProteomicsDB" id="250585"/>
<dbReference type="EnsemblPlants" id="AT1G48920.1">
    <property type="protein sequence ID" value="AT1G48920.1"/>
    <property type="gene ID" value="AT1G48920"/>
</dbReference>
<dbReference type="GeneID" id="841314"/>
<dbReference type="Gramene" id="AT1G48920.1">
    <property type="protein sequence ID" value="AT1G48920.1"/>
    <property type="gene ID" value="AT1G48920"/>
</dbReference>
<dbReference type="KEGG" id="ath:AT1G48920"/>
<dbReference type="Araport" id="AT1G48920"/>
<dbReference type="TAIR" id="AT1G48920">
    <property type="gene designation" value="NUC-L1"/>
</dbReference>
<dbReference type="eggNOG" id="KOG4210">
    <property type="taxonomic scope" value="Eukaryota"/>
</dbReference>
<dbReference type="HOGENOM" id="CLU_030920_1_0_1"/>
<dbReference type="InParanoid" id="Q9FVQ1"/>
<dbReference type="OMA" id="DIHQIRN"/>
<dbReference type="CD-CODE" id="4299E36E">
    <property type="entry name" value="Nucleolus"/>
</dbReference>
<dbReference type="PRO" id="PR:Q9FVQ1"/>
<dbReference type="Proteomes" id="UP000006548">
    <property type="component" value="Chromosome 1"/>
</dbReference>
<dbReference type="ExpressionAtlas" id="Q9FVQ1">
    <property type="expression patterns" value="baseline and differential"/>
</dbReference>
<dbReference type="GO" id="GO:0005739">
    <property type="term" value="C:mitochondrion"/>
    <property type="evidence" value="ECO:0007005"/>
    <property type="project" value="TAIR"/>
</dbReference>
<dbReference type="GO" id="GO:0005730">
    <property type="term" value="C:nucleolus"/>
    <property type="evidence" value="ECO:0000314"/>
    <property type="project" value="TAIR"/>
</dbReference>
<dbReference type="GO" id="GO:0005634">
    <property type="term" value="C:nucleus"/>
    <property type="evidence" value="ECO:0007005"/>
    <property type="project" value="TAIR"/>
</dbReference>
<dbReference type="GO" id="GO:0003677">
    <property type="term" value="F:DNA binding"/>
    <property type="evidence" value="ECO:0007669"/>
    <property type="project" value="UniProtKB-KW"/>
</dbReference>
<dbReference type="GO" id="GO:0003729">
    <property type="term" value="F:mRNA binding"/>
    <property type="evidence" value="ECO:0000314"/>
    <property type="project" value="TAIR"/>
</dbReference>
<dbReference type="GO" id="GO:0010588">
    <property type="term" value="P:cotyledon vascular tissue pattern formation"/>
    <property type="evidence" value="ECO:0000315"/>
    <property type="project" value="TAIR"/>
</dbReference>
<dbReference type="GO" id="GO:0048366">
    <property type="term" value="P:leaf development"/>
    <property type="evidence" value="ECO:0000315"/>
    <property type="project" value="TAIR"/>
</dbReference>
<dbReference type="GO" id="GO:0010305">
    <property type="term" value="P:leaf vascular tissue pattern formation"/>
    <property type="evidence" value="ECO:0000315"/>
    <property type="project" value="TAIR"/>
</dbReference>
<dbReference type="GO" id="GO:0080056">
    <property type="term" value="P:petal vascular tissue pattern formation"/>
    <property type="evidence" value="ECO:0000315"/>
    <property type="project" value="TAIR"/>
</dbReference>
<dbReference type="GO" id="GO:0042254">
    <property type="term" value="P:ribosome biogenesis"/>
    <property type="evidence" value="ECO:0000304"/>
    <property type="project" value="TAIR"/>
</dbReference>
<dbReference type="GO" id="GO:0048364">
    <property type="term" value="P:root development"/>
    <property type="evidence" value="ECO:0000315"/>
    <property type="project" value="TAIR"/>
</dbReference>
<dbReference type="GO" id="GO:0006364">
    <property type="term" value="P:rRNA processing"/>
    <property type="evidence" value="ECO:0000315"/>
    <property type="project" value="TAIR"/>
</dbReference>
<dbReference type="GO" id="GO:0080057">
    <property type="term" value="P:sepal vascular tissue pattern formation"/>
    <property type="evidence" value="ECO:0000315"/>
    <property type="project" value="TAIR"/>
</dbReference>
<dbReference type="GO" id="GO:0048367">
    <property type="term" value="P:shoot system development"/>
    <property type="evidence" value="ECO:0000315"/>
    <property type="project" value="TAIR"/>
</dbReference>
<dbReference type="CDD" id="cd12450">
    <property type="entry name" value="RRM1_NUCLs"/>
    <property type="match status" value="1"/>
</dbReference>
<dbReference type="CDD" id="cd12451">
    <property type="entry name" value="RRM2_NUCLs"/>
    <property type="match status" value="1"/>
</dbReference>
<dbReference type="FunFam" id="3.30.70.330:FF:001118">
    <property type="entry name" value="Nucleolin like 2"/>
    <property type="match status" value="1"/>
</dbReference>
<dbReference type="Gene3D" id="3.30.70.330">
    <property type="match status" value="2"/>
</dbReference>
<dbReference type="InterPro" id="IPR034349">
    <property type="entry name" value="NUCL_RRM1"/>
</dbReference>
<dbReference type="InterPro" id="IPR034350">
    <property type="entry name" value="NUCL_RRM2"/>
</dbReference>
<dbReference type="InterPro" id="IPR012677">
    <property type="entry name" value="Nucleotide-bd_a/b_plait_sf"/>
</dbReference>
<dbReference type="InterPro" id="IPR035979">
    <property type="entry name" value="RBD_domain_sf"/>
</dbReference>
<dbReference type="InterPro" id="IPR000504">
    <property type="entry name" value="RRM_dom"/>
</dbReference>
<dbReference type="PANTHER" id="PTHR23236">
    <property type="entry name" value="EUKARYOTIC TRANSLATION INITIATION FACTOR 4B/4H"/>
    <property type="match status" value="1"/>
</dbReference>
<dbReference type="PANTHER" id="PTHR23236:SF119">
    <property type="entry name" value="NUCLEAR RNA-BINDING PROTEIN SART-3"/>
    <property type="match status" value="1"/>
</dbReference>
<dbReference type="Pfam" id="PF00076">
    <property type="entry name" value="RRM_1"/>
    <property type="match status" value="2"/>
</dbReference>
<dbReference type="SMART" id="SM00360">
    <property type="entry name" value="RRM"/>
    <property type="match status" value="2"/>
</dbReference>
<dbReference type="SUPFAM" id="SSF54928">
    <property type="entry name" value="RNA-binding domain, RBD"/>
    <property type="match status" value="2"/>
</dbReference>
<dbReference type="PROSITE" id="PS50102">
    <property type="entry name" value="RRM"/>
    <property type="match status" value="2"/>
</dbReference>
<organism>
    <name type="scientific">Arabidopsis thaliana</name>
    <name type="common">Mouse-ear cress</name>
    <dbReference type="NCBI Taxonomy" id="3702"/>
    <lineage>
        <taxon>Eukaryota</taxon>
        <taxon>Viridiplantae</taxon>
        <taxon>Streptophyta</taxon>
        <taxon>Embryophyta</taxon>
        <taxon>Tracheophyta</taxon>
        <taxon>Spermatophyta</taxon>
        <taxon>Magnoliopsida</taxon>
        <taxon>eudicotyledons</taxon>
        <taxon>Gunneridae</taxon>
        <taxon>Pentapetalae</taxon>
        <taxon>rosids</taxon>
        <taxon>malvids</taxon>
        <taxon>Brassicales</taxon>
        <taxon>Brassicaceae</taxon>
        <taxon>Camelineae</taxon>
        <taxon>Arabidopsis</taxon>
    </lineage>
</organism>
<protein>
    <recommendedName>
        <fullName evidence="11">Nucleolin 1</fullName>
    </recommendedName>
    <alternativeName>
        <fullName evidence="9">Protein NUCLEOLIN LIKE 1</fullName>
        <shortName evidence="9">AtNUC-L1</shortName>
    </alternativeName>
    <alternativeName>
        <fullName evidence="10">Protein PARALLEL 1</fullName>
        <shortName evidence="10">AtPARL1</shortName>
    </alternativeName>
</protein>
<accession>Q9FVQ1</accession>
<feature type="chain" id="PRO_0000417401" description="Nucleolin 1">
    <location>
        <begin position="1"/>
        <end position="557"/>
    </location>
</feature>
<feature type="domain" description="RRM 1" evidence="1">
    <location>
        <begin position="297"/>
        <end position="374"/>
    </location>
</feature>
<feature type="domain" description="RRM 2" evidence="1">
    <location>
        <begin position="401"/>
        <end position="481"/>
    </location>
</feature>
<feature type="region of interest" description="Disordered" evidence="2">
    <location>
        <begin position="1"/>
        <end position="297"/>
    </location>
</feature>
<feature type="region of interest" description="Disordered" evidence="2">
    <location>
        <begin position="376"/>
        <end position="398"/>
    </location>
</feature>
<feature type="region of interest" description="Disordered" evidence="2">
    <location>
        <begin position="474"/>
        <end position="557"/>
    </location>
</feature>
<feature type="compositionally biased region" description="Basic and acidic residues" evidence="2">
    <location>
        <begin position="49"/>
        <end position="63"/>
    </location>
</feature>
<feature type="compositionally biased region" description="Acidic residues" evidence="2">
    <location>
        <begin position="64"/>
        <end position="74"/>
    </location>
</feature>
<feature type="compositionally biased region" description="Acidic residues" evidence="2">
    <location>
        <begin position="91"/>
        <end position="101"/>
    </location>
</feature>
<feature type="compositionally biased region" description="Acidic residues" evidence="2">
    <location>
        <begin position="124"/>
        <end position="135"/>
    </location>
</feature>
<feature type="compositionally biased region" description="Low complexity" evidence="2">
    <location>
        <begin position="174"/>
        <end position="184"/>
    </location>
</feature>
<feature type="compositionally biased region" description="Acidic residues" evidence="2">
    <location>
        <begin position="186"/>
        <end position="197"/>
    </location>
</feature>
<feature type="compositionally biased region" description="Low complexity" evidence="2">
    <location>
        <begin position="203"/>
        <end position="217"/>
    </location>
</feature>
<feature type="compositionally biased region" description="Acidic residues" evidence="2">
    <location>
        <begin position="218"/>
        <end position="229"/>
    </location>
</feature>
<feature type="compositionally biased region" description="Basic and acidic residues" evidence="2">
    <location>
        <begin position="230"/>
        <end position="247"/>
    </location>
</feature>
<feature type="compositionally biased region" description="Acidic residues" evidence="2">
    <location>
        <begin position="249"/>
        <end position="263"/>
    </location>
</feature>
<feature type="compositionally biased region" description="Basic and acidic residues" evidence="2">
    <location>
        <begin position="264"/>
        <end position="281"/>
    </location>
</feature>
<feature type="compositionally biased region" description="Gly residues" evidence="2">
    <location>
        <begin position="485"/>
        <end position="503"/>
    </location>
</feature>
<reference key="1">
    <citation type="journal article" date="2000" name="Nature">
        <title>Sequence and analysis of chromosome 1 of the plant Arabidopsis thaliana.</title>
        <authorList>
            <person name="Theologis A."/>
            <person name="Ecker J.R."/>
            <person name="Palm C.J."/>
            <person name="Federspiel N.A."/>
            <person name="Kaul S."/>
            <person name="White O."/>
            <person name="Alonso J."/>
            <person name="Altafi H."/>
            <person name="Araujo R."/>
            <person name="Bowman C.L."/>
            <person name="Brooks S.Y."/>
            <person name="Buehler E."/>
            <person name="Chan A."/>
            <person name="Chao Q."/>
            <person name="Chen H."/>
            <person name="Cheuk R.F."/>
            <person name="Chin C.W."/>
            <person name="Chung M.K."/>
            <person name="Conn L."/>
            <person name="Conway A.B."/>
            <person name="Conway A.R."/>
            <person name="Creasy T.H."/>
            <person name="Dewar K."/>
            <person name="Dunn P."/>
            <person name="Etgu P."/>
            <person name="Feldblyum T.V."/>
            <person name="Feng J.-D."/>
            <person name="Fong B."/>
            <person name="Fujii C.Y."/>
            <person name="Gill J.E."/>
            <person name="Goldsmith A.D."/>
            <person name="Haas B."/>
            <person name="Hansen N.F."/>
            <person name="Hughes B."/>
            <person name="Huizar L."/>
            <person name="Hunter J.L."/>
            <person name="Jenkins J."/>
            <person name="Johnson-Hopson C."/>
            <person name="Khan S."/>
            <person name="Khaykin E."/>
            <person name="Kim C.J."/>
            <person name="Koo H.L."/>
            <person name="Kremenetskaia I."/>
            <person name="Kurtz D.B."/>
            <person name="Kwan A."/>
            <person name="Lam B."/>
            <person name="Langin-Hooper S."/>
            <person name="Lee A."/>
            <person name="Lee J.M."/>
            <person name="Lenz C.A."/>
            <person name="Li J.H."/>
            <person name="Li Y.-P."/>
            <person name="Lin X."/>
            <person name="Liu S.X."/>
            <person name="Liu Z.A."/>
            <person name="Luros J.S."/>
            <person name="Maiti R."/>
            <person name="Marziali A."/>
            <person name="Militscher J."/>
            <person name="Miranda M."/>
            <person name="Nguyen M."/>
            <person name="Nierman W.C."/>
            <person name="Osborne B.I."/>
            <person name="Pai G."/>
            <person name="Peterson J."/>
            <person name="Pham P.K."/>
            <person name="Rizzo M."/>
            <person name="Rooney T."/>
            <person name="Rowley D."/>
            <person name="Sakano H."/>
            <person name="Salzberg S.L."/>
            <person name="Schwartz J.R."/>
            <person name="Shinn P."/>
            <person name="Southwick A.M."/>
            <person name="Sun H."/>
            <person name="Tallon L.J."/>
            <person name="Tambunga G."/>
            <person name="Toriumi M.J."/>
            <person name="Town C.D."/>
            <person name="Utterback T."/>
            <person name="Van Aken S."/>
            <person name="Vaysberg M."/>
            <person name="Vysotskaia V.S."/>
            <person name="Walker M."/>
            <person name="Wu D."/>
            <person name="Yu G."/>
            <person name="Fraser C.M."/>
            <person name="Venter J.C."/>
            <person name="Davis R.W."/>
        </authorList>
    </citation>
    <scope>NUCLEOTIDE SEQUENCE [LARGE SCALE GENOMIC DNA]</scope>
    <source>
        <strain>cv. Columbia</strain>
    </source>
</reference>
<reference key="2">
    <citation type="journal article" date="2017" name="Plant J.">
        <title>Araport11: a complete reannotation of the Arabidopsis thaliana reference genome.</title>
        <authorList>
            <person name="Cheng C.Y."/>
            <person name="Krishnakumar V."/>
            <person name="Chan A.P."/>
            <person name="Thibaud-Nissen F."/>
            <person name="Schobel S."/>
            <person name="Town C.D."/>
        </authorList>
    </citation>
    <scope>GENOME REANNOTATION</scope>
    <source>
        <strain>cv. Columbia</strain>
    </source>
</reference>
<reference key="3">
    <citation type="journal article" date="2003" name="Science">
        <title>Empirical analysis of transcriptional activity in the Arabidopsis genome.</title>
        <authorList>
            <person name="Yamada K."/>
            <person name="Lim J."/>
            <person name="Dale J.M."/>
            <person name="Chen H."/>
            <person name="Shinn P."/>
            <person name="Palm C.J."/>
            <person name="Southwick A.M."/>
            <person name="Wu H.C."/>
            <person name="Kim C.J."/>
            <person name="Nguyen M."/>
            <person name="Pham P.K."/>
            <person name="Cheuk R.F."/>
            <person name="Karlin-Newmann G."/>
            <person name="Liu S.X."/>
            <person name="Lam B."/>
            <person name="Sakano H."/>
            <person name="Wu T."/>
            <person name="Yu G."/>
            <person name="Miranda M."/>
            <person name="Quach H.L."/>
            <person name="Tripp M."/>
            <person name="Chang C.H."/>
            <person name="Lee J.M."/>
            <person name="Toriumi M.J."/>
            <person name="Chan M.M."/>
            <person name="Tang C.C."/>
            <person name="Onodera C.S."/>
            <person name="Deng J.M."/>
            <person name="Akiyama K."/>
            <person name="Ansari Y."/>
            <person name="Arakawa T."/>
            <person name="Banh J."/>
            <person name="Banno F."/>
            <person name="Bowser L."/>
            <person name="Brooks S.Y."/>
            <person name="Carninci P."/>
            <person name="Chao Q."/>
            <person name="Choy N."/>
            <person name="Enju A."/>
            <person name="Goldsmith A.D."/>
            <person name="Gurjal M."/>
            <person name="Hansen N.F."/>
            <person name="Hayashizaki Y."/>
            <person name="Johnson-Hopson C."/>
            <person name="Hsuan V.W."/>
            <person name="Iida K."/>
            <person name="Karnes M."/>
            <person name="Khan S."/>
            <person name="Koesema E."/>
            <person name="Ishida J."/>
            <person name="Jiang P.X."/>
            <person name="Jones T."/>
            <person name="Kawai J."/>
            <person name="Kamiya A."/>
            <person name="Meyers C."/>
            <person name="Nakajima M."/>
            <person name="Narusaka M."/>
            <person name="Seki M."/>
            <person name="Sakurai T."/>
            <person name="Satou M."/>
            <person name="Tamse R."/>
            <person name="Vaysberg M."/>
            <person name="Wallender E.K."/>
            <person name="Wong C."/>
            <person name="Yamamura Y."/>
            <person name="Yuan S."/>
            <person name="Shinozaki K."/>
            <person name="Davis R.W."/>
            <person name="Theologis A."/>
            <person name="Ecker J.R."/>
        </authorList>
    </citation>
    <scope>NUCLEOTIDE SEQUENCE [LARGE SCALE MRNA]</scope>
    <source>
        <strain>cv. Columbia</strain>
    </source>
</reference>
<reference key="4">
    <citation type="journal article" date="2007" name="Mol. Biol. Cell">
        <title>Characterization of AtNUC-L1 reveals a central role of nucleolin in nucleolus organization and silencing of AtNUC-L2 gene in Arabidopsis.</title>
        <authorList>
            <person name="Pontvianne F."/>
            <person name="Matia I."/>
            <person name="Douet J."/>
            <person name="Tourmente S."/>
            <person name="Medina F.J."/>
            <person name="Echeverria M."/>
            <person name="Saez-Vasquez J."/>
        </authorList>
    </citation>
    <scope>FUNCTION</scope>
    <scope>SUBCELLULAR LOCATION</scope>
    <scope>TISSUE SPECIFICITY</scope>
    <scope>DISRUPTION PHENOTYPE</scope>
</reference>
<reference key="5">
    <citation type="journal article" date="2007" name="Mol. Cell. Proteomics">
        <title>Multidimensional protein identification technology (MudPIT) analysis of ubiquitinated proteins in plants.</title>
        <authorList>
            <person name="Maor R."/>
            <person name="Jones A."/>
            <person name="Nuehse T.S."/>
            <person name="Studholme D.J."/>
            <person name="Peck S.C."/>
            <person name="Shirasu K."/>
        </authorList>
    </citation>
    <scope>IDENTIFICATION BY MASS SPECTROMETRY [LARGE SCALE ANALYSIS]</scope>
    <source>
        <strain>cv. Landsberg erecta</strain>
    </source>
</reference>
<reference key="6">
    <citation type="journal article" date="2007" name="Plant J.">
        <title>Sugar-inducible expression of the nucleolin-1 gene of Arabidopsis thaliana and its role in ribosome synthesis, growth and development.</title>
        <authorList>
            <person name="Kojima H."/>
            <person name="Suzuki T."/>
            <person name="Kato T."/>
            <person name="Enomoto K."/>
            <person name="Sato S."/>
            <person name="Kato T."/>
            <person name="Tabata S."/>
            <person name="Saez-Vasquez J."/>
            <person name="Echeverria M."/>
            <person name="Nakagawa T."/>
            <person name="Ishiguro S."/>
            <person name="Nakamura K."/>
        </authorList>
    </citation>
    <scope>FUNCTION</scope>
    <scope>SUBCELLULAR LOCATION</scope>
    <scope>TISSUE SPECIFICITY</scope>
    <scope>INDUCTION</scope>
    <scope>DISRUPTION PHENOTYPE</scope>
</reference>
<reference key="7">
    <citation type="journal article" date="2007" name="Plant Physiol.">
        <title>Arabidopsis nucleolin affects plant development and patterning.</title>
        <authorList>
            <person name="Petricka J.J."/>
            <person name="Nelson T.M."/>
        </authorList>
    </citation>
    <scope>FUNCTION</scope>
    <scope>SUBCELLULAR LOCATION</scope>
    <scope>TISSUE SPECIFICITY</scope>
    <scope>DISRUPTION PHENOTYPE</scope>
</reference>
<reference key="8">
    <citation type="journal article" date="2009" name="Plant Physiol.">
        <title>Large-scale Arabidopsis phosphoproteome profiling reveals novel chloroplast kinase substrates and phosphorylation networks.</title>
        <authorList>
            <person name="Reiland S."/>
            <person name="Messerli G."/>
            <person name="Baerenfaller K."/>
            <person name="Gerrits B."/>
            <person name="Endler A."/>
            <person name="Grossmann J."/>
            <person name="Gruissem W."/>
            <person name="Baginsky S."/>
        </authorList>
    </citation>
    <scope>IDENTIFICATION BY MASS SPECTROMETRY [LARGE SCALE ANALYSIS]</scope>
</reference>
<reference key="9">
    <citation type="journal article" date="2010" name="PLoS Genet.">
        <title>Nucleolin is required for DNA methylation state and the expression of rRNA gene variants in Arabidopsis thaliana.</title>
        <authorList>
            <person name="Pontvianne F."/>
            <person name="Abou-Ellail M."/>
            <person name="Douet J."/>
            <person name="Comella P."/>
            <person name="Matia I."/>
            <person name="Chandrasekhara C."/>
            <person name="Debures A."/>
            <person name="Blevins T."/>
            <person name="Cooke R."/>
            <person name="Medina F.J."/>
            <person name="Tourmente S."/>
            <person name="Pikaard C.S."/>
            <person name="Saez-Vasquez J."/>
        </authorList>
    </citation>
    <scope>FUNCTION</scope>
    <scope>DISRUPTION PHENOTYPE</scope>
</reference>
<reference key="10">
    <citation type="journal article" date="2016" name="Biol. Open">
        <title>A genetic link between epigenetic repressor AS1-AS2 and a putative small subunit processome in leaf polarity establishment of Arabidopsis.</title>
        <authorList>
            <person name="Matsumura Y."/>
            <person name="Ohbayashi I."/>
            <person name="Takahashi H."/>
            <person name="Kojima S."/>
            <person name="Ishibashi N."/>
            <person name="Keta S."/>
            <person name="Nakagawa A."/>
            <person name="Hayashi R."/>
            <person name="Saez-Vasquez J."/>
            <person name="Echeverria M."/>
            <person name="Sugiyama M."/>
            <person name="Nakamura K."/>
            <person name="Machida C."/>
            <person name="Machida Y."/>
        </authorList>
    </citation>
    <scope>FUNCTION</scope>
    <scope>DISRUPTION PHENOTYPE</scope>
</reference>
<reference key="11">
    <citation type="journal article" date="2016" name="PLoS Genet.">
        <title>Dual role of a SAS10/C1D family protein in ribosomal RNA gene expression and processing is essential for reproduction in Arabidopsis thaliana.</title>
        <authorList>
            <person name="Chen Y.-J.C."/>
            <person name="Wang H.-J."/>
            <person name="Jauh G.-Y."/>
        </authorList>
    </citation>
    <scope>SUBCELLULAR LOCATION</scope>
    <scope>INTERACTION WITH THAL</scope>
    <source>
        <strain>cv. Columbia</strain>
    </source>
</reference>
<gene>
    <name evidence="9" type="primary">NUCL1</name>
    <name evidence="11" type="synonym">NUC1</name>
    <name evidence="10" type="synonym">PARL1</name>
    <name evidence="13" type="ordered locus">At1g48920</name>
    <name evidence="14" type="ORF">F27K7.6</name>
</gene>
<sequence>MGKSKSATKVVAEIKATKPLKKGKREPEDDIDTKVSLKKQKKDVIAAVQKEKAVKKVPKKVESSDDSDSESEEEEKAKKVPAKKAASSSDESSDDSSSDDEPAPKKAVAATNGTVAKKSKDDSSSSDDDSSDEEVAVTKKPAAAAKNGSVKAKKESSSEDDSSSEDEPAKKPAAKIAKPAAKDSSSSDDDSDEDSEDEKPATKKAAPAAAKAASSSDSSDEDSDEESEDEKPAQKKADTKASKKSSSDESSESEEDESEDEEETPKKKSSDVEMVDAEKSSAKQPKTPSTPAAGGSKTLFAANLSFNIERADVENFFKEAGEVVDVRFSTNRDDGSFRGFGHVEFASSEEAQKALEFHGRPLLGREIRLDIAQERGERGERPAFTPQSGNFRSGGDGGDEKKIFVKGFDASLSEDDIKNTLREHFSSCGEIKNVSVPIDRDTGNSKGIAYLEFSEGKEKALELNGSDMGGGFYLVVDEPRPRGDSSGGGGFGRGNGRFGSGGGRGRDGGRGRFGSGGGRGRDGGRGRFGSGGGRGSDRGRGRPSFTPQGKKTTFGDE</sequence>
<name>NUCL1_ARATH</name>
<evidence type="ECO:0000255" key="1">
    <source>
        <dbReference type="PROSITE-ProRule" id="PRU00176"/>
    </source>
</evidence>
<evidence type="ECO:0000256" key="2">
    <source>
        <dbReference type="SAM" id="MobiDB-lite"/>
    </source>
</evidence>
<evidence type="ECO:0000269" key="3">
    <source>
    </source>
</evidence>
<evidence type="ECO:0000269" key="4">
    <source>
    </source>
</evidence>
<evidence type="ECO:0000269" key="5">
    <source>
    </source>
</evidence>
<evidence type="ECO:0000269" key="6">
    <source>
    </source>
</evidence>
<evidence type="ECO:0000269" key="7">
    <source>
    </source>
</evidence>
<evidence type="ECO:0000269" key="8">
    <source>
    </source>
</evidence>
<evidence type="ECO:0000303" key="9">
    <source>
    </source>
</evidence>
<evidence type="ECO:0000303" key="10">
    <source>
    </source>
</evidence>
<evidence type="ECO:0000303" key="11">
    <source>
    </source>
</evidence>
<evidence type="ECO:0000305" key="12">
    <source>
    </source>
</evidence>
<evidence type="ECO:0000312" key="13">
    <source>
        <dbReference type="Araport" id="AT1G48920"/>
    </source>
</evidence>
<evidence type="ECO:0000312" key="14">
    <source>
        <dbReference type="EMBL" id="AAG29744.1"/>
    </source>
</evidence>
<comment type="function">
    <text evidence="3 4 5 6 7">Involved in pre-rRNA processing and ribosome assembly (PubMed:17108323, PubMed:17286797, PubMed:17369435, PubMed:21124873). Is associated with intranucleolar chromatin and pre-ribosomal particles and plays a role in controlling activation and repression of a specific subset of rRNA genes located in distinctive nucleolar organizer regions. Binds specifically rDNA chromatin and may be required to maintain rDNA chromatin structure, but is probably not required for the overall histone methylation status of 45S rRNA genes (PubMed:17108323, PubMed:17286797, PubMed:21124873). Involved in leaf polarity establishment by functioning cooperatively with AS1 to repress abaxial genes ARF3, ARF4, KAN1, KAN2, YAB1 and YAB5, and the knox homeobox genes KNAT1, KNAT2, KNAT6, and STM to promote adaxial development in leaf primordia at shoot apical meristems at high temperatures (PubMed:27334696).</text>
</comment>
<comment type="subunit">
    <text evidence="8">Interacts with THAL in the nucleus.</text>
</comment>
<comment type="subcellular location">
    <subcellularLocation>
        <location evidence="3 4 5 8">Nucleus</location>
        <location evidence="3 4 5 8">Nucleolus</location>
    </subcellularLocation>
    <text evidence="3">Found in the dense fibrillar component region of the nucleolus.</text>
</comment>
<comment type="tissue specificity">
    <text evidence="3 4 5">Expressed in roots, leaves, shoots and flowers.</text>
</comment>
<comment type="induction">
    <text evidence="4">By glucose and sucrose (at protein level).</text>
</comment>
<comment type="disruption phenotype">
    <text evidence="3 4 5 6 7">Reduced growth, bushy plants with stunted leaves, abnormal vascular patterns and many stems (PubMed:17286797, PubMed:17369435, PubMed:21124873). Plants exhibit a pointed narrow shape of leaves, but no filamentous leaves. Plants with double mutations in this protein and in AS2 or AS1 protein show severe defects in leaf shape and filamentous leaves are efficiently formed, although a few normally shaped leaves and markedly narrow leaves are also generated (PubMed:27334696). Altered nucleolus ultrastructure (PubMed:17108323).</text>
</comment>
<comment type="miscellaneous">
    <text evidence="12">Disruption of NUCL1 induces NUCL2 expression.</text>
</comment>
<keyword id="KW-0238">DNA-binding</keyword>
<keyword id="KW-0539">Nucleus</keyword>
<keyword id="KW-1185">Reference proteome</keyword>
<keyword id="KW-0677">Repeat</keyword>
<keyword id="KW-0678">Repressor</keyword>
<keyword id="KW-0694">RNA-binding</keyword>
<keyword id="KW-0698">rRNA processing</keyword>
<keyword id="KW-0346">Stress response</keyword>
<proteinExistence type="evidence at protein level"/>